<evidence type="ECO:0000255" key="1">
    <source>
        <dbReference type="HAMAP-Rule" id="MF_01320"/>
    </source>
</evidence>
<evidence type="ECO:0000256" key="2">
    <source>
        <dbReference type="SAM" id="MobiDB-lite"/>
    </source>
</evidence>
<evidence type="ECO:0000305" key="3"/>
<comment type="function">
    <text evidence="1">One of the primary rRNA binding proteins. Required for association of the 30S and 50S subunits to form the 70S ribosome, for tRNA binding and peptide bond formation. It has been suggested to have peptidyltransferase activity; this is somewhat controversial. Makes several contacts with the 16S rRNA in the 70S ribosome.</text>
</comment>
<comment type="subunit">
    <text evidence="1">Part of the 50S ribosomal subunit. Forms a bridge to the 30S subunit in the 70S ribosome.</text>
</comment>
<comment type="similarity">
    <text evidence="1">Belongs to the universal ribosomal protein uL2 family.</text>
</comment>
<accession>Q5L717</accession>
<reference key="1">
    <citation type="journal article" date="2005" name="Genome Res.">
        <title>The Chlamydophila abortus genome sequence reveals an array of variable proteins that contribute to interspecies variation.</title>
        <authorList>
            <person name="Thomson N.R."/>
            <person name="Yeats C."/>
            <person name="Bell K."/>
            <person name="Holden M.T.G."/>
            <person name="Bentley S.D."/>
            <person name="Livingstone M."/>
            <person name="Cerdeno-Tarraga A.-M."/>
            <person name="Harris B."/>
            <person name="Doggett J."/>
            <person name="Ormond D."/>
            <person name="Mungall K."/>
            <person name="Clarke K."/>
            <person name="Feltwell T."/>
            <person name="Hance Z."/>
            <person name="Sanders M."/>
            <person name="Quail M.A."/>
            <person name="Price C."/>
            <person name="Barrell B.G."/>
            <person name="Parkhill J."/>
            <person name="Longbottom D."/>
        </authorList>
    </citation>
    <scope>NUCLEOTIDE SEQUENCE [LARGE SCALE GENOMIC DNA]</scope>
    <source>
        <strain>DSM 27085 / S26/3</strain>
    </source>
</reference>
<gene>
    <name evidence="1" type="primary">rplB</name>
    <name type="ordered locus">CAB096</name>
</gene>
<proteinExistence type="inferred from homology"/>
<dbReference type="EMBL" id="CR848038">
    <property type="protein sequence ID" value="CAH63553.1"/>
    <property type="molecule type" value="Genomic_DNA"/>
</dbReference>
<dbReference type="RefSeq" id="WP_006342771.1">
    <property type="nucleotide sequence ID" value="NC_004552.2"/>
</dbReference>
<dbReference type="SMR" id="Q5L717"/>
<dbReference type="GeneID" id="93024642"/>
<dbReference type="KEGG" id="cab:CAB096"/>
<dbReference type="eggNOG" id="COG0090">
    <property type="taxonomic scope" value="Bacteria"/>
</dbReference>
<dbReference type="HOGENOM" id="CLU_036235_2_1_0"/>
<dbReference type="OrthoDB" id="9778722at2"/>
<dbReference type="Proteomes" id="UP000001012">
    <property type="component" value="Chromosome"/>
</dbReference>
<dbReference type="GO" id="GO:0015934">
    <property type="term" value="C:large ribosomal subunit"/>
    <property type="evidence" value="ECO:0007669"/>
    <property type="project" value="InterPro"/>
</dbReference>
<dbReference type="GO" id="GO:0019843">
    <property type="term" value="F:rRNA binding"/>
    <property type="evidence" value="ECO:0007669"/>
    <property type="project" value="UniProtKB-UniRule"/>
</dbReference>
<dbReference type="GO" id="GO:0003735">
    <property type="term" value="F:structural constituent of ribosome"/>
    <property type="evidence" value="ECO:0007669"/>
    <property type="project" value="InterPro"/>
</dbReference>
<dbReference type="GO" id="GO:0016740">
    <property type="term" value="F:transferase activity"/>
    <property type="evidence" value="ECO:0007669"/>
    <property type="project" value="InterPro"/>
</dbReference>
<dbReference type="GO" id="GO:0002181">
    <property type="term" value="P:cytoplasmic translation"/>
    <property type="evidence" value="ECO:0007669"/>
    <property type="project" value="TreeGrafter"/>
</dbReference>
<dbReference type="FunFam" id="2.30.30.30:FF:000001">
    <property type="entry name" value="50S ribosomal protein L2"/>
    <property type="match status" value="1"/>
</dbReference>
<dbReference type="FunFam" id="2.40.50.140:FF:000003">
    <property type="entry name" value="50S ribosomal protein L2"/>
    <property type="match status" value="1"/>
</dbReference>
<dbReference type="FunFam" id="4.10.950.10:FF:000001">
    <property type="entry name" value="50S ribosomal protein L2"/>
    <property type="match status" value="1"/>
</dbReference>
<dbReference type="Gene3D" id="2.30.30.30">
    <property type="match status" value="1"/>
</dbReference>
<dbReference type="Gene3D" id="2.40.50.140">
    <property type="entry name" value="Nucleic acid-binding proteins"/>
    <property type="match status" value="1"/>
</dbReference>
<dbReference type="Gene3D" id="4.10.950.10">
    <property type="entry name" value="Ribosomal protein L2, domain 3"/>
    <property type="match status" value="1"/>
</dbReference>
<dbReference type="HAMAP" id="MF_01320_B">
    <property type="entry name" value="Ribosomal_uL2_B"/>
    <property type="match status" value="1"/>
</dbReference>
<dbReference type="InterPro" id="IPR012340">
    <property type="entry name" value="NA-bd_OB-fold"/>
</dbReference>
<dbReference type="InterPro" id="IPR014722">
    <property type="entry name" value="Rib_uL2_dom2"/>
</dbReference>
<dbReference type="InterPro" id="IPR002171">
    <property type="entry name" value="Ribosomal_uL2"/>
</dbReference>
<dbReference type="InterPro" id="IPR005880">
    <property type="entry name" value="Ribosomal_uL2_bac/org-type"/>
</dbReference>
<dbReference type="InterPro" id="IPR022669">
    <property type="entry name" value="Ribosomal_uL2_C"/>
</dbReference>
<dbReference type="InterPro" id="IPR022671">
    <property type="entry name" value="Ribosomal_uL2_CS"/>
</dbReference>
<dbReference type="InterPro" id="IPR014726">
    <property type="entry name" value="Ribosomal_uL2_dom3"/>
</dbReference>
<dbReference type="InterPro" id="IPR022666">
    <property type="entry name" value="Ribosomal_uL2_RNA-bd_dom"/>
</dbReference>
<dbReference type="InterPro" id="IPR008991">
    <property type="entry name" value="Translation_prot_SH3-like_sf"/>
</dbReference>
<dbReference type="NCBIfam" id="TIGR01171">
    <property type="entry name" value="rplB_bact"/>
    <property type="match status" value="1"/>
</dbReference>
<dbReference type="PANTHER" id="PTHR13691:SF5">
    <property type="entry name" value="LARGE RIBOSOMAL SUBUNIT PROTEIN UL2M"/>
    <property type="match status" value="1"/>
</dbReference>
<dbReference type="PANTHER" id="PTHR13691">
    <property type="entry name" value="RIBOSOMAL PROTEIN L2"/>
    <property type="match status" value="1"/>
</dbReference>
<dbReference type="Pfam" id="PF00181">
    <property type="entry name" value="Ribosomal_L2"/>
    <property type="match status" value="1"/>
</dbReference>
<dbReference type="Pfam" id="PF03947">
    <property type="entry name" value="Ribosomal_L2_C"/>
    <property type="match status" value="1"/>
</dbReference>
<dbReference type="PIRSF" id="PIRSF002158">
    <property type="entry name" value="Ribosomal_L2"/>
    <property type="match status" value="1"/>
</dbReference>
<dbReference type="SMART" id="SM01383">
    <property type="entry name" value="Ribosomal_L2"/>
    <property type="match status" value="1"/>
</dbReference>
<dbReference type="SMART" id="SM01382">
    <property type="entry name" value="Ribosomal_L2_C"/>
    <property type="match status" value="1"/>
</dbReference>
<dbReference type="SUPFAM" id="SSF50249">
    <property type="entry name" value="Nucleic acid-binding proteins"/>
    <property type="match status" value="1"/>
</dbReference>
<dbReference type="SUPFAM" id="SSF50104">
    <property type="entry name" value="Translation proteins SH3-like domain"/>
    <property type="match status" value="1"/>
</dbReference>
<dbReference type="PROSITE" id="PS00467">
    <property type="entry name" value="RIBOSOMAL_L2"/>
    <property type="match status" value="1"/>
</dbReference>
<feature type="chain" id="PRO_0000237172" description="Large ribosomal subunit protein uL2">
    <location>
        <begin position="1"/>
        <end position="284"/>
    </location>
</feature>
<feature type="region of interest" description="Disordered" evidence="2">
    <location>
        <begin position="232"/>
        <end position="284"/>
    </location>
</feature>
<feature type="compositionally biased region" description="Basic and acidic residues" evidence="2">
    <location>
        <begin position="240"/>
        <end position="250"/>
    </location>
</feature>
<feature type="compositionally biased region" description="Basic residues" evidence="2">
    <location>
        <begin position="264"/>
        <end position="284"/>
    </location>
</feature>
<sequence>MFKKFKPVTPGTRQLVLPAFDELTTQGELSGKKTRKSVRPNKKLSFFKKSSGGRDNLGHISCRHRGGGAKRLYRVIDFKRNKDGIEAKVVSVEYDPNRSAYIALLSYADGEKRYILAPKGIKRGDQVISGEGSPFKLGCCMTLKSMPLGSTVHNIEMRPHSGGKLVRSAGLAAQVIAKTPGYVTLKMPSGEFRMLNEGCRATIGEVSNSDHNLCVDGKAGRKRWKGIRPTVRGTAMNPVDHPHGGGEGRHNGYIPRTPWGKVTKGLKTRDKRKSNKWIVKDRRK</sequence>
<protein>
    <recommendedName>
        <fullName evidence="1">Large ribosomal subunit protein uL2</fullName>
    </recommendedName>
    <alternativeName>
        <fullName evidence="3">50S ribosomal protein L2</fullName>
    </alternativeName>
</protein>
<keyword id="KW-0687">Ribonucleoprotein</keyword>
<keyword id="KW-0689">Ribosomal protein</keyword>
<keyword id="KW-0694">RNA-binding</keyword>
<keyword id="KW-0699">rRNA-binding</keyword>
<organism>
    <name type="scientific">Chlamydia abortus (strain DSM 27085 / S26/3)</name>
    <name type="common">Chlamydophila abortus</name>
    <dbReference type="NCBI Taxonomy" id="218497"/>
    <lineage>
        <taxon>Bacteria</taxon>
        <taxon>Pseudomonadati</taxon>
        <taxon>Chlamydiota</taxon>
        <taxon>Chlamydiia</taxon>
        <taxon>Chlamydiales</taxon>
        <taxon>Chlamydiaceae</taxon>
        <taxon>Chlamydia/Chlamydophila group</taxon>
        <taxon>Chlamydia</taxon>
    </lineage>
</organism>
<name>RL2_CHLAB</name>